<protein>
    <recommendedName>
        <fullName evidence="1">Uronate isomerase</fullName>
        <ecNumber evidence="1">5.3.1.12</ecNumber>
    </recommendedName>
    <alternativeName>
        <fullName evidence="1">Glucuronate isomerase</fullName>
    </alternativeName>
    <alternativeName>
        <fullName evidence="1">Uronic isomerase</fullName>
    </alternativeName>
</protein>
<feature type="chain" id="PRO_1000082963" description="Uronate isomerase">
    <location>
        <begin position="1"/>
        <end position="467"/>
    </location>
</feature>
<dbReference type="EC" id="5.3.1.12" evidence="1"/>
<dbReference type="EMBL" id="CP000947">
    <property type="protein sequence ID" value="ACA32051.1"/>
    <property type="molecule type" value="Genomic_DNA"/>
</dbReference>
<dbReference type="RefSeq" id="WP_012341255.1">
    <property type="nucleotide sequence ID" value="NC_010519.1"/>
</dbReference>
<dbReference type="SMR" id="B0URH4"/>
<dbReference type="STRING" id="228400.HSM_0409"/>
<dbReference type="GeneID" id="31486689"/>
<dbReference type="KEGG" id="hsm:HSM_0409"/>
<dbReference type="HOGENOM" id="CLU_044465_1_0_6"/>
<dbReference type="UniPathway" id="UPA00246"/>
<dbReference type="GO" id="GO:0008880">
    <property type="term" value="F:glucuronate isomerase activity"/>
    <property type="evidence" value="ECO:0007669"/>
    <property type="project" value="UniProtKB-UniRule"/>
</dbReference>
<dbReference type="GO" id="GO:0019698">
    <property type="term" value="P:D-galacturonate catabolic process"/>
    <property type="evidence" value="ECO:0007669"/>
    <property type="project" value="TreeGrafter"/>
</dbReference>
<dbReference type="GO" id="GO:0042840">
    <property type="term" value="P:D-glucuronate catabolic process"/>
    <property type="evidence" value="ECO:0007669"/>
    <property type="project" value="TreeGrafter"/>
</dbReference>
<dbReference type="Gene3D" id="3.20.20.140">
    <property type="entry name" value="Metal-dependent hydrolases"/>
    <property type="match status" value="1"/>
</dbReference>
<dbReference type="Gene3D" id="1.10.2020.10">
    <property type="entry name" value="uronate isomerase, domain 2, chain A"/>
    <property type="match status" value="1"/>
</dbReference>
<dbReference type="HAMAP" id="MF_00675">
    <property type="entry name" value="UxaC"/>
    <property type="match status" value="1"/>
</dbReference>
<dbReference type="InterPro" id="IPR032466">
    <property type="entry name" value="Metal_Hydrolase"/>
</dbReference>
<dbReference type="InterPro" id="IPR003766">
    <property type="entry name" value="Uronate_isomerase"/>
</dbReference>
<dbReference type="NCBIfam" id="NF002794">
    <property type="entry name" value="PRK02925.1"/>
    <property type="match status" value="1"/>
</dbReference>
<dbReference type="PANTHER" id="PTHR30068">
    <property type="entry name" value="URONATE ISOMERASE"/>
    <property type="match status" value="1"/>
</dbReference>
<dbReference type="PANTHER" id="PTHR30068:SF4">
    <property type="entry name" value="URONATE ISOMERASE"/>
    <property type="match status" value="1"/>
</dbReference>
<dbReference type="Pfam" id="PF02614">
    <property type="entry name" value="UxaC"/>
    <property type="match status" value="1"/>
</dbReference>
<dbReference type="SUPFAM" id="SSF51556">
    <property type="entry name" value="Metallo-dependent hydrolases"/>
    <property type="match status" value="1"/>
</dbReference>
<sequence length="467" mass="54080">MMKFMTEDFLLSTSTAQKLYHDYAEEQPIFDYHCHLNPKEIAENRQFNDLAEIWLEGDHYKWRAMRSAGVEEHLITGSADKYSKYLAFANTVPKCIGNPIYHWTHLELRRPFGITDTIFSPETAEKIWHKGKELLQQPEFSARGIMKKMNVNLVGTTDDPIDSLEYHKAIAEDNTFDVEVVPSFRPDRAFKIELPLFNDYIEQLGKVADIEINTFDKLKQALSKRIEHFDKYGCKSADHGMEIVRFSPIPDEKTLDQILQKRLNNQPIEEEEIAQFSTALLVWLGTEYHKHHWVMQLHIGAIRNNNTRMFKLLGADAGFDSIGDRAFAESLSRLLDSMDQTDQLPKTILYCLNPRDNEMLGTMIGNFQTGGIAGKIQFGSGWWFNDQKDGMERQLQQLSQLGLLSQFVGMLTDSRSFLSYTRHEYFRRILCEMIGGWVERGEAPNDLNLLGKMVKDICYDNAKRYFK</sequence>
<reference key="1">
    <citation type="submission" date="2008-02" db="EMBL/GenBank/DDBJ databases">
        <title>Complete sequence of Haemophilus somnus 2336.</title>
        <authorList>
            <consortium name="US DOE Joint Genome Institute"/>
            <person name="Siddaramappa S."/>
            <person name="Duncan A.J."/>
            <person name="Challacombe J.F."/>
            <person name="Rainey D."/>
            <person name="Gillaspy A.F."/>
            <person name="Carson M."/>
            <person name="Gipson J."/>
            <person name="Gipson M."/>
            <person name="Bruce D."/>
            <person name="Detter J.C."/>
            <person name="Han C.S."/>
            <person name="Land M."/>
            <person name="Tapia R."/>
            <person name="Thompson L.S."/>
            <person name="Orvis J."/>
            <person name="Zaitshik J."/>
            <person name="Barnes G."/>
            <person name="Brettin T.S."/>
            <person name="Dyer D.W."/>
            <person name="Inzana T.J."/>
        </authorList>
    </citation>
    <scope>NUCLEOTIDE SEQUENCE [LARGE SCALE GENOMIC DNA]</scope>
    <source>
        <strain>2336</strain>
    </source>
</reference>
<name>UXAC_HISS2</name>
<keyword id="KW-0413">Isomerase</keyword>
<organism>
    <name type="scientific">Histophilus somni (strain 2336)</name>
    <name type="common">Haemophilus somnus</name>
    <dbReference type="NCBI Taxonomy" id="228400"/>
    <lineage>
        <taxon>Bacteria</taxon>
        <taxon>Pseudomonadati</taxon>
        <taxon>Pseudomonadota</taxon>
        <taxon>Gammaproteobacteria</taxon>
        <taxon>Pasteurellales</taxon>
        <taxon>Pasteurellaceae</taxon>
        <taxon>Histophilus</taxon>
    </lineage>
</organism>
<accession>B0URH4</accession>
<proteinExistence type="inferred from homology"/>
<comment type="catalytic activity">
    <reaction evidence="1">
        <text>D-glucuronate = D-fructuronate</text>
        <dbReference type="Rhea" id="RHEA:13049"/>
        <dbReference type="ChEBI" id="CHEBI:58720"/>
        <dbReference type="ChEBI" id="CHEBI:59863"/>
        <dbReference type="EC" id="5.3.1.12"/>
    </reaction>
</comment>
<comment type="catalytic activity">
    <reaction evidence="1">
        <text>aldehydo-D-galacturonate = keto-D-tagaturonate</text>
        <dbReference type="Rhea" id="RHEA:27702"/>
        <dbReference type="ChEBI" id="CHEBI:12952"/>
        <dbReference type="ChEBI" id="CHEBI:17886"/>
        <dbReference type="EC" id="5.3.1.12"/>
    </reaction>
</comment>
<comment type="pathway">
    <text evidence="1">Carbohydrate metabolism; pentose and glucuronate interconversion.</text>
</comment>
<comment type="similarity">
    <text evidence="1">Belongs to the metallo-dependent hydrolases superfamily. Uronate isomerase family.</text>
</comment>
<gene>
    <name evidence="1" type="primary">uxaC</name>
    <name type="ordered locus">HSM_0409</name>
</gene>
<evidence type="ECO:0000255" key="1">
    <source>
        <dbReference type="HAMAP-Rule" id="MF_00675"/>
    </source>
</evidence>